<proteinExistence type="evidence at protein level"/>
<sequence>MNVHRGSDSDRLLRQEASCLVDDTLAVAQEKEANSLASSGPHNLTYPLGPRNEDLSLDYASQPANLQFPHIMPLAEDIKGSCFQSGNKRNHEPFIAPERFGNSSVGFGSNSHSQAPEKVTLLVDGTRFVVNPQIFTAHPDTMLGRMFGPGREYNFTRPNEKGEYEIAEGISATVFRTVLDYYKTGIINCPDGISIPDLRDTCDYLCINFDFNTIRCQDLSALLHELSNDGAHKQFDHYLEELILPIMVGCAKKGERECHIVVLTDEDSVDWDEDHPPPMGEEYSQILYSSKLYRFFKYIENRDVAKTVLKERGLKNIRIGIEGYPTCKEKIKRRPGGRSEVIYNYVQRPFIQMSWEKEEGKSRHVDFQCVRSKSLTNLVAAGDDVLEDQEILMHHPPQVDELDRLNAPLSQMASNDFQD</sequence>
<dbReference type="EMBL" id="AY305862">
    <property type="protein sequence ID" value="AAP74385.1"/>
    <property type="molecule type" value="mRNA"/>
</dbReference>
<dbReference type="EMBL" id="AK302861">
    <property type="protein sequence ID" value="BAG64045.1"/>
    <property type="molecule type" value="mRNA"/>
</dbReference>
<dbReference type="EMBL" id="AK304377">
    <property type="protein sequence ID" value="BAG65215.1"/>
    <property type="molecule type" value="mRNA"/>
</dbReference>
<dbReference type="EMBL" id="AL136135">
    <property type="status" value="NOT_ANNOTATED_CDS"/>
    <property type="molecule type" value="Genomic_DNA"/>
</dbReference>
<dbReference type="EMBL" id="Z85986">
    <property type="status" value="NOT_ANNOTATED_CDS"/>
    <property type="molecule type" value="Genomic_DNA"/>
</dbReference>
<dbReference type="EMBL" id="CH471081">
    <property type="protein sequence ID" value="EAX03892.1"/>
    <property type="molecule type" value="Genomic_DNA"/>
</dbReference>
<dbReference type="EMBL" id="BC023525">
    <property type="protein sequence ID" value="AAH23525.1"/>
    <property type="molecule type" value="mRNA"/>
</dbReference>
<dbReference type="EMBL" id="AL832381">
    <property type="protein sequence ID" value="CAH10583.1"/>
    <property type="molecule type" value="mRNA"/>
</dbReference>
<dbReference type="CCDS" id="CCDS4821.1">
    <molecule id="Q7Z5Y7-1"/>
</dbReference>
<dbReference type="CCDS" id="CCDS69096.1">
    <molecule id="Q7Z5Y7-2"/>
</dbReference>
<dbReference type="CCDS" id="CCDS69097.1">
    <molecule id="Q7Z5Y7-3"/>
</dbReference>
<dbReference type="RefSeq" id="NP_001273508.1">
    <molecule id="Q7Z5Y7-2"/>
    <property type="nucleotide sequence ID" value="NM_001286579.2"/>
</dbReference>
<dbReference type="RefSeq" id="NP_001273509.1">
    <molecule id="Q7Z5Y7-3"/>
    <property type="nucleotide sequence ID" value="NM_001286580.2"/>
</dbReference>
<dbReference type="RefSeq" id="NP_775833.2">
    <molecule id="Q7Z5Y7-1"/>
    <property type="nucleotide sequence ID" value="NM_173562.4"/>
</dbReference>
<dbReference type="RefSeq" id="XP_005248997.1">
    <molecule id="Q7Z5Y7-1"/>
    <property type="nucleotide sequence ID" value="XM_005248940.6"/>
</dbReference>
<dbReference type="RefSeq" id="XP_006715086.1">
    <molecule id="Q7Z5Y7-1"/>
    <property type="nucleotide sequence ID" value="XM_006715023.3"/>
</dbReference>
<dbReference type="RefSeq" id="XP_011512700.1">
    <molecule id="Q7Z5Y7-1"/>
    <property type="nucleotide sequence ID" value="XM_011514398.4"/>
</dbReference>
<dbReference type="RefSeq" id="XP_047274333.1">
    <molecule id="Q7Z5Y7-1"/>
    <property type="nucleotide sequence ID" value="XM_047418377.1"/>
</dbReference>
<dbReference type="RefSeq" id="XP_054210629.1">
    <molecule id="Q7Z5Y7-1"/>
    <property type="nucleotide sequence ID" value="XM_054354654.1"/>
</dbReference>
<dbReference type="RefSeq" id="XP_054210630.1">
    <molecule id="Q7Z5Y7-1"/>
    <property type="nucleotide sequence ID" value="XM_054354655.1"/>
</dbReference>
<dbReference type="RefSeq" id="XP_054210631.1">
    <molecule id="Q7Z5Y7-1"/>
    <property type="nucleotide sequence ID" value="XM_054354656.1"/>
</dbReference>
<dbReference type="RefSeq" id="XP_054210632.1">
    <molecule id="Q7Z5Y7-1"/>
    <property type="nucleotide sequence ID" value="XM_054354657.1"/>
</dbReference>
<dbReference type="SMR" id="Q7Z5Y7"/>
<dbReference type="BioGRID" id="128809">
    <property type="interactions" value="18"/>
</dbReference>
<dbReference type="FunCoup" id="Q7Z5Y7">
    <property type="interactions" value="1370"/>
</dbReference>
<dbReference type="IntAct" id="Q7Z5Y7">
    <property type="interactions" value="13"/>
</dbReference>
<dbReference type="STRING" id="9606.ENSP00000362836"/>
<dbReference type="iPTMnet" id="Q7Z5Y7"/>
<dbReference type="PhosphoSitePlus" id="Q7Z5Y7"/>
<dbReference type="BioMuta" id="KCTD20"/>
<dbReference type="DMDM" id="74750149"/>
<dbReference type="jPOST" id="Q7Z5Y7"/>
<dbReference type="MassIVE" id="Q7Z5Y7"/>
<dbReference type="PaxDb" id="9606-ENSP00000362836"/>
<dbReference type="PeptideAtlas" id="Q7Z5Y7"/>
<dbReference type="ProteomicsDB" id="26368"/>
<dbReference type="ProteomicsDB" id="69360">
    <molecule id="Q7Z5Y7-1"/>
</dbReference>
<dbReference type="ProteomicsDB" id="69361">
    <molecule id="Q7Z5Y7-2"/>
</dbReference>
<dbReference type="Pumba" id="Q7Z5Y7"/>
<dbReference type="Antibodypedia" id="29679">
    <property type="antibodies" value="52 antibodies from 16 providers"/>
</dbReference>
<dbReference type="DNASU" id="222658"/>
<dbReference type="Ensembl" id="ENST00000373731.7">
    <molecule id="Q7Z5Y7-1"/>
    <property type="protein sequence ID" value="ENSP00000362836.2"/>
    <property type="gene ID" value="ENSG00000112078.14"/>
</dbReference>
<dbReference type="Ensembl" id="ENST00000449081.6">
    <molecule id="Q7Z5Y7-2"/>
    <property type="protein sequence ID" value="ENSP00000412205.2"/>
    <property type="gene ID" value="ENSG00000112078.14"/>
</dbReference>
<dbReference type="Ensembl" id="ENST00000536244.5">
    <molecule id="Q7Z5Y7-3"/>
    <property type="protein sequence ID" value="ENSP00000439118.1"/>
    <property type="gene ID" value="ENSG00000112078.14"/>
</dbReference>
<dbReference type="GeneID" id="222658"/>
<dbReference type="KEGG" id="hsa:222658"/>
<dbReference type="MANE-Select" id="ENST00000373731.7">
    <property type="protein sequence ID" value="ENSP00000362836.2"/>
    <property type="RefSeq nucleotide sequence ID" value="NM_173562.5"/>
    <property type="RefSeq protein sequence ID" value="NP_775833.2"/>
</dbReference>
<dbReference type="UCSC" id="uc003ome.4">
    <molecule id="Q7Z5Y7-1"/>
    <property type="organism name" value="human"/>
</dbReference>
<dbReference type="AGR" id="HGNC:21052"/>
<dbReference type="CTD" id="222658"/>
<dbReference type="DisGeNET" id="222658"/>
<dbReference type="GeneCards" id="KCTD20"/>
<dbReference type="HGNC" id="HGNC:21052">
    <property type="gene designation" value="KCTD20"/>
</dbReference>
<dbReference type="HPA" id="ENSG00000112078">
    <property type="expression patterns" value="Low tissue specificity"/>
</dbReference>
<dbReference type="MIM" id="615932">
    <property type="type" value="gene"/>
</dbReference>
<dbReference type="neXtProt" id="NX_Q7Z5Y7"/>
<dbReference type="OpenTargets" id="ENSG00000112078"/>
<dbReference type="PharmGKB" id="PA134913479"/>
<dbReference type="VEuPathDB" id="HostDB:ENSG00000112078"/>
<dbReference type="eggNOG" id="KOG3840">
    <property type="taxonomic scope" value="Eukaryota"/>
</dbReference>
<dbReference type="GeneTree" id="ENSGT00390000007975"/>
<dbReference type="HOGENOM" id="CLU_036245_0_0_1"/>
<dbReference type="InParanoid" id="Q7Z5Y7"/>
<dbReference type="OMA" id="WNHEPFI"/>
<dbReference type="OrthoDB" id="10034757at2759"/>
<dbReference type="PAN-GO" id="Q7Z5Y7">
    <property type="GO annotations" value="2 GO annotations based on evolutionary models"/>
</dbReference>
<dbReference type="PhylomeDB" id="Q7Z5Y7"/>
<dbReference type="TreeFam" id="TF314369"/>
<dbReference type="PathwayCommons" id="Q7Z5Y7"/>
<dbReference type="SignaLink" id="Q7Z5Y7"/>
<dbReference type="BioGRID-ORCS" id="222658">
    <property type="hits" value="8 hits in 1159 CRISPR screens"/>
</dbReference>
<dbReference type="ChiTaRS" id="KCTD20">
    <property type="organism name" value="human"/>
</dbReference>
<dbReference type="GenomeRNAi" id="222658"/>
<dbReference type="Pharos" id="Q7Z5Y7">
    <property type="development level" value="Tdark"/>
</dbReference>
<dbReference type="PRO" id="PR:Q7Z5Y7"/>
<dbReference type="Proteomes" id="UP000005640">
    <property type="component" value="Chromosome 6"/>
</dbReference>
<dbReference type="RNAct" id="Q7Z5Y7">
    <property type="molecule type" value="protein"/>
</dbReference>
<dbReference type="Bgee" id="ENSG00000112078">
    <property type="expression patterns" value="Expressed in amniotic fluid and 190 other cell types or tissues"/>
</dbReference>
<dbReference type="ExpressionAtlas" id="Q7Z5Y7">
    <property type="expression patterns" value="baseline and differential"/>
</dbReference>
<dbReference type="GO" id="GO:0005737">
    <property type="term" value="C:cytoplasm"/>
    <property type="evidence" value="ECO:0000250"/>
    <property type="project" value="UniProtKB"/>
</dbReference>
<dbReference type="GO" id="GO:0042802">
    <property type="term" value="F:identical protein binding"/>
    <property type="evidence" value="ECO:0007669"/>
    <property type="project" value="Ensembl"/>
</dbReference>
<dbReference type="GO" id="GO:0042327">
    <property type="term" value="P:positive regulation of phosphorylation"/>
    <property type="evidence" value="ECO:0000250"/>
    <property type="project" value="UniProtKB"/>
</dbReference>
<dbReference type="CDD" id="cd18386">
    <property type="entry name" value="BTB_POZ_KCTD20"/>
    <property type="match status" value="1"/>
</dbReference>
<dbReference type="FunFam" id="3.30.710.10:FF:000017">
    <property type="entry name" value="BTB/POZ domain-containing protein 10 isoform X1"/>
    <property type="match status" value="1"/>
</dbReference>
<dbReference type="Gene3D" id="3.30.710.10">
    <property type="entry name" value="Potassium Channel Kv1.1, Chain A"/>
    <property type="match status" value="1"/>
</dbReference>
<dbReference type="InterPro" id="IPR000210">
    <property type="entry name" value="BTB/POZ_dom"/>
</dbReference>
<dbReference type="InterPro" id="IPR039886">
    <property type="entry name" value="BTBD10/KCTD20"/>
</dbReference>
<dbReference type="InterPro" id="IPR039885">
    <property type="entry name" value="BTBD10/KCTD20_BTB/POZ"/>
</dbReference>
<dbReference type="InterPro" id="IPR011333">
    <property type="entry name" value="SKP1/BTB/POZ_sf"/>
</dbReference>
<dbReference type="PANTHER" id="PTHR21637">
    <property type="entry name" value="BTB/POZ DOMAIN-CONTAINING PROTEIN 10-RELATED"/>
    <property type="match status" value="1"/>
</dbReference>
<dbReference type="PANTHER" id="PTHR21637:SF1">
    <property type="entry name" value="BTB_POZ DOMAIN-CONTAINING PROTEIN KCTD20"/>
    <property type="match status" value="1"/>
</dbReference>
<dbReference type="Pfam" id="PF16017">
    <property type="entry name" value="BTB_3"/>
    <property type="match status" value="1"/>
</dbReference>
<dbReference type="SMART" id="SM00225">
    <property type="entry name" value="BTB"/>
    <property type="match status" value="1"/>
</dbReference>
<dbReference type="SUPFAM" id="SSF54695">
    <property type="entry name" value="POZ domain"/>
    <property type="match status" value="1"/>
</dbReference>
<gene>
    <name type="primary">KCTD20</name>
    <name type="synonym">C6orf69</name>
</gene>
<reference key="1">
    <citation type="submission" date="2003-05" db="EMBL/GenBank/DDBJ databases">
        <authorList>
            <person name="Huang C.Q."/>
            <person name="Chen Z."/>
            <person name="Wu S.L."/>
            <person name="Shan Y.X."/>
            <person name="Liu S."/>
            <person name="Xiao P.J."/>
        </authorList>
    </citation>
    <scope>NUCLEOTIDE SEQUENCE [MRNA] (ISOFORM 1)</scope>
</reference>
<reference key="2">
    <citation type="journal article" date="2004" name="Nat. Genet.">
        <title>Complete sequencing and characterization of 21,243 full-length human cDNAs.</title>
        <authorList>
            <person name="Ota T."/>
            <person name="Suzuki Y."/>
            <person name="Nishikawa T."/>
            <person name="Otsuki T."/>
            <person name="Sugiyama T."/>
            <person name="Irie R."/>
            <person name="Wakamatsu A."/>
            <person name="Hayashi K."/>
            <person name="Sato H."/>
            <person name="Nagai K."/>
            <person name="Kimura K."/>
            <person name="Makita H."/>
            <person name="Sekine M."/>
            <person name="Obayashi M."/>
            <person name="Nishi T."/>
            <person name="Shibahara T."/>
            <person name="Tanaka T."/>
            <person name="Ishii S."/>
            <person name="Yamamoto J."/>
            <person name="Saito K."/>
            <person name="Kawai Y."/>
            <person name="Isono Y."/>
            <person name="Nakamura Y."/>
            <person name="Nagahari K."/>
            <person name="Murakami K."/>
            <person name="Yasuda T."/>
            <person name="Iwayanagi T."/>
            <person name="Wagatsuma M."/>
            <person name="Shiratori A."/>
            <person name="Sudo H."/>
            <person name="Hosoiri T."/>
            <person name="Kaku Y."/>
            <person name="Kodaira H."/>
            <person name="Kondo H."/>
            <person name="Sugawara M."/>
            <person name="Takahashi M."/>
            <person name="Kanda K."/>
            <person name="Yokoi T."/>
            <person name="Furuya T."/>
            <person name="Kikkawa E."/>
            <person name="Omura Y."/>
            <person name="Abe K."/>
            <person name="Kamihara K."/>
            <person name="Katsuta N."/>
            <person name="Sato K."/>
            <person name="Tanikawa M."/>
            <person name="Yamazaki M."/>
            <person name="Ninomiya K."/>
            <person name="Ishibashi T."/>
            <person name="Yamashita H."/>
            <person name="Murakawa K."/>
            <person name="Fujimori K."/>
            <person name="Tanai H."/>
            <person name="Kimata M."/>
            <person name="Watanabe M."/>
            <person name="Hiraoka S."/>
            <person name="Chiba Y."/>
            <person name="Ishida S."/>
            <person name="Ono Y."/>
            <person name="Takiguchi S."/>
            <person name="Watanabe S."/>
            <person name="Yosida M."/>
            <person name="Hotuta T."/>
            <person name="Kusano J."/>
            <person name="Kanehori K."/>
            <person name="Takahashi-Fujii A."/>
            <person name="Hara H."/>
            <person name="Tanase T.-O."/>
            <person name="Nomura Y."/>
            <person name="Togiya S."/>
            <person name="Komai F."/>
            <person name="Hara R."/>
            <person name="Takeuchi K."/>
            <person name="Arita M."/>
            <person name="Imose N."/>
            <person name="Musashino K."/>
            <person name="Yuuki H."/>
            <person name="Oshima A."/>
            <person name="Sasaki N."/>
            <person name="Aotsuka S."/>
            <person name="Yoshikawa Y."/>
            <person name="Matsunawa H."/>
            <person name="Ichihara T."/>
            <person name="Shiohata N."/>
            <person name="Sano S."/>
            <person name="Moriya S."/>
            <person name="Momiyama H."/>
            <person name="Satoh N."/>
            <person name="Takami S."/>
            <person name="Terashima Y."/>
            <person name="Suzuki O."/>
            <person name="Nakagawa S."/>
            <person name="Senoh A."/>
            <person name="Mizoguchi H."/>
            <person name="Goto Y."/>
            <person name="Shimizu F."/>
            <person name="Wakebe H."/>
            <person name="Hishigaki H."/>
            <person name="Watanabe T."/>
            <person name="Sugiyama A."/>
            <person name="Takemoto M."/>
            <person name="Kawakami B."/>
            <person name="Yamazaki M."/>
            <person name="Watanabe K."/>
            <person name="Kumagai A."/>
            <person name="Itakura S."/>
            <person name="Fukuzumi Y."/>
            <person name="Fujimori Y."/>
            <person name="Komiyama M."/>
            <person name="Tashiro H."/>
            <person name="Tanigami A."/>
            <person name="Fujiwara T."/>
            <person name="Ono T."/>
            <person name="Yamada K."/>
            <person name="Fujii Y."/>
            <person name="Ozaki K."/>
            <person name="Hirao M."/>
            <person name="Ohmori Y."/>
            <person name="Kawabata A."/>
            <person name="Hikiji T."/>
            <person name="Kobatake N."/>
            <person name="Inagaki H."/>
            <person name="Ikema Y."/>
            <person name="Okamoto S."/>
            <person name="Okitani R."/>
            <person name="Kawakami T."/>
            <person name="Noguchi S."/>
            <person name="Itoh T."/>
            <person name="Shigeta K."/>
            <person name="Senba T."/>
            <person name="Matsumura K."/>
            <person name="Nakajima Y."/>
            <person name="Mizuno T."/>
            <person name="Morinaga M."/>
            <person name="Sasaki M."/>
            <person name="Togashi T."/>
            <person name="Oyama M."/>
            <person name="Hata H."/>
            <person name="Watanabe M."/>
            <person name="Komatsu T."/>
            <person name="Mizushima-Sugano J."/>
            <person name="Satoh T."/>
            <person name="Shirai Y."/>
            <person name="Takahashi Y."/>
            <person name="Nakagawa K."/>
            <person name="Okumura K."/>
            <person name="Nagase T."/>
            <person name="Nomura N."/>
            <person name="Kikuchi H."/>
            <person name="Masuho Y."/>
            <person name="Yamashita R."/>
            <person name="Nakai K."/>
            <person name="Yada T."/>
            <person name="Nakamura Y."/>
            <person name="Ohara O."/>
            <person name="Isogai T."/>
            <person name="Sugano S."/>
        </authorList>
    </citation>
    <scope>NUCLEOTIDE SEQUENCE [LARGE SCALE MRNA] (ISOFORMS 1 AND 3)</scope>
    <scope>VARIANT THR-171</scope>
    <source>
        <tissue>Trachea</tissue>
    </source>
</reference>
<reference key="3">
    <citation type="journal article" date="2003" name="Nature">
        <title>The DNA sequence and analysis of human chromosome 6.</title>
        <authorList>
            <person name="Mungall A.J."/>
            <person name="Palmer S.A."/>
            <person name="Sims S.K."/>
            <person name="Edwards C.A."/>
            <person name="Ashurst J.L."/>
            <person name="Wilming L."/>
            <person name="Jones M.C."/>
            <person name="Horton R."/>
            <person name="Hunt S.E."/>
            <person name="Scott C.E."/>
            <person name="Gilbert J.G.R."/>
            <person name="Clamp M.E."/>
            <person name="Bethel G."/>
            <person name="Milne S."/>
            <person name="Ainscough R."/>
            <person name="Almeida J.P."/>
            <person name="Ambrose K.D."/>
            <person name="Andrews T.D."/>
            <person name="Ashwell R.I.S."/>
            <person name="Babbage A.K."/>
            <person name="Bagguley C.L."/>
            <person name="Bailey J."/>
            <person name="Banerjee R."/>
            <person name="Barker D.J."/>
            <person name="Barlow K.F."/>
            <person name="Bates K."/>
            <person name="Beare D.M."/>
            <person name="Beasley H."/>
            <person name="Beasley O."/>
            <person name="Bird C.P."/>
            <person name="Blakey S.E."/>
            <person name="Bray-Allen S."/>
            <person name="Brook J."/>
            <person name="Brown A.J."/>
            <person name="Brown J.Y."/>
            <person name="Burford D.C."/>
            <person name="Burrill W."/>
            <person name="Burton J."/>
            <person name="Carder C."/>
            <person name="Carter N.P."/>
            <person name="Chapman J.C."/>
            <person name="Clark S.Y."/>
            <person name="Clark G."/>
            <person name="Clee C.M."/>
            <person name="Clegg S."/>
            <person name="Cobley V."/>
            <person name="Collier R.E."/>
            <person name="Collins J.E."/>
            <person name="Colman L.K."/>
            <person name="Corby N.R."/>
            <person name="Coville G.J."/>
            <person name="Culley K.M."/>
            <person name="Dhami P."/>
            <person name="Davies J."/>
            <person name="Dunn M."/>
            <person name="Earthrowl M.E."/>
            <person name="Ellington A.E."/>
            <person name="Evans K.A."/>
            <person name="Faulkner L."/>
            <person name="Francis M.D."/>
            <person name="Frankish A."/>
            <person name="Frankland J."/>
            <person name="French L."/>
            <person name="Garner P."/>
            <person name="Garnett J."/>
            <person name="Ghori M.J."/>
            <person name="Gilby L.M."/>
            <person name="Gillson C.J."/>
            <person name="Glithero R.J."/>
            <person name="Grafham D.V."/>
            <person name="Grant M."/>
            <person name="Gribble S."/>
            <person name="Griffiths C."/>
            <person name="Griffiths M.N.D."/>
            <person name="Hall R."/>
            <person name="Halls K.S."/>
            <person name="Hammond S."/>
            <person name="Harley J.L."/>
            <person name="Hart E.A."/>
            <person name="Heath P.D."/>
            <person name="Heathcott R."/>
            <person name="Holmes S.J."/>
            <person name="Howden P.J."/>
            <person name="Howe K.L."/>
            <person name="Howell G.R."/>
            <person name="Huckle E."/>
            <person name="Humphray S.J."/>
            <person name="Humphries M.D."/>
            <person name="Hunt A.R."/>
            <person name="Johnson C.M."/>
            <person name="Joy A.A."/>
            <person name="Kay M."/>
            <person name="Keenan S.J."/>
            <person name="Kimberley A.M."/>
            <person name="King A."/>
            <person name="Laird G.K."/>
            <person name="Langford C."/>
            <person name="Lawlor S."/>
            <person name="Leongamornlert D.A."/>
            <person name="Leversha M."/>
            <person name="Lloyd C.R."/>
            <person name="Lloyd D.M."/>
            <person name="Loveland J.E."/>
            <person name="Lovell J."/>
            <person name="Martin S."/>
            <person name="Mashreghi-Mohammadi M."/>
            <person name="Maslen G.L."/>
            <person name="Matthews L."/>
            <person name="McCann O.T."/>
            <person name="McLaren S.J."/>
            <person name="McLay K."/>
            <person name="McMurray A."/>
            <person name="Moore M.J.F."/>
            <person name="Mullikin J.C."/>
            <person name="Niblett D."/>
            <person name="Nickerson T."/>
            <person name="Novik K.L."/>
            <person name="Oliver K."/>
            <person name="Overton-Larty E.K."/>
            <person name="Parker A."/>
            <person name="Patel R."/>
            <person name="Pearce A.V."/>
            <person name="Peck A.I."/>
            <person name="Phillimore B.J.C.T."/>
            <person name="Phillips S."/>
            <person name="Plumb R.W."/>
            <person name="Porter K.M."/>
            <person name="Ramsey Y."/>
            <person name="Ranby S.A."/>
            <person name="Rice C.M."/>
            <person name="Ross M.T."/>
            <person name="Searle S.M."/>
            <person name="Sehra H.K."/>
            <person name="Sheridan E."/>
            <person name="Skuce C.D."/>
            <person name="Smith S."/>
            <person name="Smith M."/>
            <person name="Spraggon L."/>
            <person name="Squares S.L."/>
            <person name="Steward C.A."/>
            <person name="Sycamore N."/>
            <person name="Tamlyn-Hall G."/>
            <person name="Tester J."/>
            <person name="Theaker A.J."/>
            <person name="Thomas D.W."/>
            <person name="Thorpe A."/>
            <person name="Tracey A."/>
            <person name="Tromans A."/>
            <person name="Tubby B."/>
            <person name="Wall M."/>
            <person name="Wallis J.M."/>
            <person name="West A.P."/>
            <person name="White S.S."/>
            <person name="Whitehead S.L."/>
            <person name="Whittaker H."/>
            <person name="Wild A."/>
            <person name="Willey D.J."/>
            <person name="Wilmer T.E."/>
            <person name="Wood J.M."/>
            <person name="Wray P.W."/>
            <person name="Wyatt J.C."/>
            <person name="Young L."/>
            <person name="Younger R.M."/>
            <person name="Bentley D.R."/>
            <person name="Coulson A."/>
            <person name="Durbin R.M."/>
            <person name="Hubbard T."/>
            <person name="Sulston J.E."/>
            <person name="Dunham I."/>
            <person name="Rogers J."/>
            <person name="Beck S."/>
        </authorList>
    </citation>
    <scope>NUCLEOTIDE SEQUENCE [LARGE SCALE GENOMIC DNA]</scope>
</reference>
<reference key="4">
    <citation type="submission" date="2005-07" db="EMBL/GenBank/DDBJ databases">
        <authorList>
            <person name="Mural R.J."/>
            <person name="Istrail S."/>
            <person name="Sutton G.G."/>
            <person name="Florea L."/>
            <person name="Halpern A.L."/>
            <person name="Mobarry C.M."/>
            <person name="Lippert R."/>
            <person name="Walenz B."/>
            <person name="Shatkay H."/>
            <person name="Dew I."/>
            <person name="Miller J.R."/>
            <person name="Flanigan M.J."/>
            <person name="Edwards N.J."/>
            <person name="Bolanos R."/>
            <person name="Fasulo D."/>
            <person name="Halldorsson B.V."/>
            <person name="Hannenhalli S."/>
            <person name="Turner R."/>
            <person name="Yooseph S."/>
            <person name="Lu F."/>
            <person name="Nusskern D.R."/>
            <person name="Shue B.C."/>
            <person name="Zheng X.H."/>
            <person name="Zhong F."/>
            <person name="Delcher A.L."/>
            <person name="Huson D.H."/>
            <person name="Kravitz S.A."/>
            <person name="Mouchard L."/>
            <person name="Reinert K."/>
            <person name="Remington K.A."/>
            <person name="Clark A.G."/>
            <person name="Waterman M.S."/>
            <person name="Eichler E.E."/>
            <person name="Adams M.D."/>
            <person name="Hunkapiller M.W."/>
            <person name="Myers E.W."/>
            <person name="Venter J.C."/>
        </authorList>
    </citation>
    <scope>NUCLEOTIDE SEQUENCE [LARGE SCALE GENOMIC DNA]</scope>
</reference>
<reference key="5">
    <citation type="journal article" date="2004" name="Genome Res.">
        <title>The status, quality, and expansion of the NIH full-length cDNA project: the Mammalian Gene Collection (MGC).</title>
        <authorList>
            <consortium name="The MGC Project Team"/>
        </authorList>
    </citation>
    <scope>NUCLEOTIDE SEQUENCE [LARGE SCALE MRNA] (ISOFORM 2)</scope>
    <source>
        <tissue>Brain</tissue>
    </source>
</reference>
<reference key="6">
    <citation type="journal article" date="2007" name="BMC Genomics">
        <title>The full-ORF clone resource of the German cDNA consortium.</title>
        <authorList>
            <person name="Bechtel S."/>
            <person name="Rosenfelder H."/>
            <person name="Duda A."/>
            <person name="Schmidt C.P."/>
            <person name="Ernst U."/>
            <person name="Wellenreuther R."/>
            <person name="Mehrle A."/>
            <person name="Schuster C."/>
            <person name="Bahr A."/>
            <person name="Bloecker H."/>
            <person name="Heubner D."/>
            <person name="Hoerlein A."/>
            <person name="Michel G."/>
            <person name="Wedler H."/>
            <person name="Koehrer K."/>
            <person name="Ottenwaelder B."/>
            <person name="Poustka A."/>
            <person name="Wiemann S."/>
            <person name="Schupp I."/>
        </authorList>
    </citation>
    <scope>NUCLEOTIDE SEQUENCE [LARGE SCALE MRNA] OF 34-419 (ISOFORM 1)</scope>
    <source>
        <tissue>Skeletal muscle</tissue>
    </source>
</reference>
<reference key="7">
    <citation type="journal article" date="2004" name="J. Biol. Chem.">
        <title>Comprehensive proteomic analysis of human Par protein complexes reveals an interconnected protein network.</title>
        <authorList>
            <person name="Brajenovic M."/>
            <person name="Joberty G."/>
            <person name="Kuster B."/>
            <person name="Bouwmeester T."/>
            <person name="Drewes G."/>
        </authorList>
    </citation>
    <scope>INTERACTION WITH MARK4</scope>
</reference>
<reference key="8">
    <citation type="journal article" date="2014" name="J. Proteomics">
        <title>An enzyme assisted RP-RPLC approach for in-depth analysis of human liver phosphoproteome.</title>
        <authorList>
            <person name="Bian Y."/>
            <person name="Song C."/>
            <person name="Cheng K."/>
            <person name="Dong M."/>
            <person name="Wang F."/>
            <person name="Huang J."/>
            <person name="Sun D."/>
            <person name="Wang L."/>
            <person name="Ye M."/>
            <person name="Zou H."/>
        </authorList>
    </citation>
    <scope>IDENTIFICATION BY MASS SPECTROMETRY [LARGE SCALE ANALYSIS]</scope>
    <source>
        <tissue>Liver</tissue>
    </source>
</reference>
<accession>Q7Z5Y7</accession>
<accession>B4DZD3</accession>
<accession>B4E2Q3</accession>
<accession>F5H3T3</accession>
<accession>Q5W105</accession>
<accession>Q69YQ7</accession>
<accession>Q8IZ55</accession>
<comment type="function">
    <text evidence="1">Promotes the phosphorylation of AKT family members.</text>
</comment>
<comment type="subunit">
    <text evidence="1 2">Interacts with AKT1; AKT2 and AKT3 (By similarity). Associates with PP2CA (By similarity). Part of a complex containing MARK4 (PubMed:14676191).</text>
</comment>
<comment type="subcellular location">
    <subcellularLocation>
        <location evidence="1">Cytoplasm</location>
    </subcellularLocation>
    <text evidence="1">Colocalizes with BTBD10 in filamentous structures.</text>
</comment>
<comment type="alternative products">
    <event type="alternative splicing"/>
    <isoform>
        <id>Q7Z5Y7-1</id>
        <name>1</name>
        <sequence type="displayed"/>
    </isoform>
    <isoform>
        <id>Q7Z5Y7-2</id>
        <name>2</name>
        <sequence type="described" ref="VSP_021277 VSP_021278"/>
    </isoform>
    <isoform>
        <id>Q7Z5Y7-3</id>
        <name>3</name>
        <sequence type="described" ref="VSP_055669"/>
    </isoform>
</comment>
<name>KCD20_HUMAN</name>
<protein>
    <recommendedName>
        <fullName>BTB/POZ domain-containing protein KCTD20</fullName>
    </recommendedName>
    <alternativeName>
        <fullName>Potassium channel tetramerization domain containing 20</fullName>
    </alternativeName>
</protein>
<organism>
    <name type="scientific">Homo sapiens</name>
    <name type="common">Human</name>
    <dbReference type="NCBI Taxonomy" id="9606"/>
    <lineage>
        <taxon>Eukaryota</taxon>
        <taxon>Metazoa</taxon>
        <taxon>Chordata</taxon>
        <taxon>Craniata</taxon>
        <taxon>Vertebrata</taxon>
        <taxon>Euteleostomi</taxon>
        <taxon>Mammalia</taxon>
        <taxon>Eutheria</taxon>
        <taxon>Euarchontoglires</taxon>
        <taxon>Primates</taxon>
        <taxon>Haplorrhini</taxon>
        <taxon>Catarrhini</taxon>
        <taxon>Hominidae</taxon>
        <taxon>Homo</taxon>
    </lineage>
</organism>
<evidence type="ECO:0000250" key="1">
    <source>
        <dbReference type="UniProtKB" id="Q8CDD8"/>
    </source>
</evidence>
<evidence type="ECO:0000269" key="2">
    <source>
    </source>
</evidence>
<evidence type="ECO:0000269" key="3">
    <source>
    </source>
</evidence>
<evidence type="ECO:0000303" key="4">
    <source>
    </source>
</evidence>
<evidence type="ECO:0000303" key="5">
    <source>
    </source>
</evidence>
<evidence type="ECO:0000305" key="6"/>
<feature type="chain" id="PRO_0000255248" description="BTB/POZ domain-containing protein KCTD20">
    <location>
        <begin position="1"/>
        <end position="419"/>
    </location>
</feature>
<feature type="domain" description="BTB">
    <location>
        <begin position="117"/>
        <end position="191"/>
    </location>
</feature>
<feature type="splice variant" id="VSP_055669" description="In isoform 3." evidence="4">
    <location>
        <begin position="1"/>
        <end position="145"/>
    </location>
</feature>
<feature type="splice variant" id="VSP_021277" description="In isoform 2." evidence="5">
    <original>D</original>
    <variation>G</variation>
    <location>
        <position position="54"/>
    </location>
</feature>
<feature type="splice variant" id="VSP_021278" description="In isoform 2." evidence="5">
    <location>
        <begin position="55"/>
        <end position="220"/>
    </location>
</feature>
<feature type="sequence variant" id="VAR_028854" description="In dbSNP:rs2239808." evidence="3">
    <original>S</original>
    <variation>T</variation>
    <location>
        <position position="171"/>
    </location>
</feature>
<feature type="sequence conflict" description="In Ref. 6; CAH10583." evidence="6" ref="6">
    <original>H</original>
    <variation>R</variation>
    <location>
        <position position="70"/>
    </location>
</feature>
<feature type="sequence conflict" description="In Ref. 6; CAH10583." evidence="6" ref="6">
    <original>L</original>
    <variation>P</variation>
    <location>
        <position position="205"/>
    </location>
</feature>
<keyword id="KW-0025">Alternative splicing</keyword>
<keyword id="KW-0963">Cytoplasm</keyword>
<keyword id="KW-1267">Proteomics identification</keyword>
<keyword id="KW-1185">Reference proteome</keyword>